<evidence type="ECO:0000250" key="1">
    <source>
        <dbReference type="UniProtKB" id="Q5U3C3"/>
    </source>
</evidence>
<evidence type="ECO:0000255" key="2"/>
<evidence type="ECO:0000256" key="3">
    <source>
        <dbReference type="SAM" id="MobiDB-lite"/>
    </source>
</evidence>
<evidence type="ECO:0000305" key="4"/>
<dbReference type="EMBL" id="AK165839">
    <property type="protein sequence ID" value="BAE38406.1"/>
    <property type="molecule type" value="mRNA"/>
</dbReference>
<dbReference type="EMBL" id="AK165910">
    <property type="protein sequence ID" value="BAE38455.1"/>
    <property type="molecule type" value="mRNA"/>
</dbReference>
<dbReference type="EMBL" id="BC056470">
    <property type="protein sequence ID" value="AAH56470.1"/>
    <property type="molecule type" value="mRNA"/>
</dbReference>
<dbReference type="CCDS" id="CCDS30451.1"/>
<dbReference type="RefSeq" id="NP_001186289.1">
    <property type="nucleotide sequence ID" value="NM_001199360.1"/>
</dbReference>
<dbReference type="RefSeq" id="NP_808260.2">
    <property type="nucleotide sequence ID" value="NM_177592.4"/>
</dbReference>
<dbReference type="FunCoup" id="Q6PHN7">
    <property type="interactions" value="190"/>
</dbReference>
<dbReference type="STRING" id="10090.ENSMUSP00000108517"/>
<dbReference type="iPTMnet" id="Q6PHN7"/>
<dbReference type="PhosphoSitePlus" id="Q6PHN7"/>
<dbReference type="PaxDb" id="10090-ENSMUSP00000108517"/>
<dbReference type="PeptideAtlas" id="Q6PHN7"/>
<dbReference type="ProteomicsDB" id="258905"/>
<dbReference type="Pumba" id="Q6PHN7"/>
<dbReference type="Antibodypedia" id="51401">
    <property type="antibodies" value="23 antibodies from 11 providers"/>
</dbReference>
<dbReference type="Ensembl" id="ENSMUST00000087333.9">
    <property type="protein sequence ID" value="ENSMUSP00000084591.3"/>
    <property type="gene ID" value="ENSMUSG00000047045.18"/>
</dbReference>
<dbReference type="Ensembl" id="ENSMUST00000112896.9">
    <property type="protein sequence ID" value="ENSMUSP00000108517.3"/>
    <property type="gene ID" value="ENSMUSG00000047045.18"/>
</dbReference>
<dbReference type="Ensembl" id="ENSMUST00000133634.8">
    <property type="protein sequence ID" value="ENSMUSP00000138503.2"/>
    <property type="gene ID" value="ENSMUSG00000047045.18"/>
</dbReference>
<dbReference type="GeneID" id="209497"/>
<dbReference type="KEGG" id="mmu:209497"/>
<dbReference type="UCSC" id="uc009ulx.2">
    <property type="organism name" value="mouse"/>
</dbReference>
<dbReference type="AGR" id="MGI:2148020"/>
<dbReference type="CTD" id="84187"/>
<dbReference type="MGI" id="MGI:2148020">
    <property type="gene designation" value="Tmem164"/>
</dbReference>
<dbReference type="VEuPathDB" id="HostDB:ENSMUSG00000047045"/>
<dbReference type="eggNOG" id="ENOG502QWAJ">
    <property type="taxonomic scope" value="Eukaryota"/>
</dbReference>
<dbReference type="GeneTree" id="ENSGT00390000007430"/>
<dbReference type="HOGENOM" id="CLU_072415_0_0_1"/>
<dbReference type="InParanoid" id="Q6PHN7"/>
<dbReference type="OMA" id="FIYIMHG"/>
<dbReference type="OrthoDB" id="17328at2759"/>
<dbReference type="PhylomeDB" id="Q6PHN7"/>
<dbReference type="TreeFam" id="TF324458"/>
<dbReference type="BioGRID-ORCS" id="209497">
    <property type="hits" value="3 hits in 76 CRISPR screens"/>
</dbReference>
<dbReference type="ChiTaRS" id="Tmem164">
    <property type="organism name" value="mouse"/>
</dbReference>
<dbReference type="PRO" id="PR:Q6PHN7"/>
<dbReference type="Proteomes" id="UP000000589">
    <property type="component" value="Chromosome X"/>
</dbReference>
<dbReference type="RNAct" id="Q6PHN7">
    <property type="molecule type" value="protein"/>
</dbReference>
<dbReference type="Bgee" id="ENSMUSG00000047045">
    <property type="expression patterns" value="Expressed in paneth cell and 230 other cell types or tissues"/>
</dbReference>
<dbReference type="ExpressionAtlas" id="Q6PHN7">
    <property type="expression patterns" value="baseline and differential"/>
</dbReference>
<dbReference type="GO" id="GO:0016020">
    <property type="term" value="C:membrane"/>
    <property type="evidence" value="ECO:0007669"/>
    <property type="project" value="UniProtKB-SubCell"/>
</dbReference>
<dbReference type="GO" id="GO:0160020">
    <property type="term" value="P:positive regulation of ferroptosis"/>
    <property type="evidence" value="ECO:0000250"/>
    <property type="project" value="UniProtKB"/>
</dbReference>
<dbReference type="InterPro" id="IPR026508">
    <property type="entry name" value="TMEM164"/>
</dbReference>
<dbReference type="PANTHER" id="PTHR20948">
    <property type="entry name" value="TRANSMEMBRANE PROTEIN 164"/>
    <property type="match status" value="1"/>
</dbReference>
<dbReference type="PANTHER" id="PTHR20948:SF2">
    <property type="entry name" value="TRANSMEMBRANE PROTEIN 164"/>
    <property type="match status" value="1"/>
</dbReference>
<dbReference type="Pfam" id="PF14808">
    <property type="entry name" value="TMEM164"/>
    <property type="match status" value="1"/>
</dbReference>
<comment type="function">
    <text evidence="1">Positive regulator of ferroptosis. Involved in the acylation of ether lysophospholipids with the arachidonoyl chain (5Z,8Z,11Z,14Z-eicosatetraenoyl; C20:4) of diacylglycerophospholipids, generating C20:4 ether glycerophospholipids (ePEs) such as 1-(1Z-octadecenyl)-2-(5Z,8Z,11Z,14Z-eicosatetraenoyl)-sn-glycero-3-phosphoethanolamine (PE (P-18:0/20:4)), which promotes ferroptosis. Selectively mediates ATG5-dependent autophagosome formation during ferroptosis, rather than during starvation, and regulates the degradation of ferritin, GPX4 and lipid droplets to increase iron accumulation and lipid peroxidation, thereby promoting ferroptotic cell death.</text>
</comment>
<comment type="catalytic activity">
    <reaction evidence="1">
        <text>1-(1Z-octadecenyl)-sn-glycero-3-phosphoethanolamine + 1-octadecanoyl-2-(5Z,8Z,11Z,14Z-eicosatetraenoyl)-sn-glycero-3-phosphocholine = 1-(1Z-octadecenyl)-2-(5Z,8Z,11Z,14Z- eicosatetraenoyl)-sn-glycero-3-phosphoethanolamine + 1-octadecanoyl-sn-glycero-3-phosphocholine</text>
        <dbReference type="Rhea" id="RHEA:79431"/>
        <dbReference type="ChEBI" id="CHEBI:73858"/>
        <dbReference type="ChEBI" id="CHEBI:74965"/>
        <dbReference type="ChEBI" id="CHEBI:78342"/>
        <dbReference type="ChEBI" id="CHEBI:229972"/>
    </reaction>
    <physiologicalReaction direction="left-to-right" evidence="1">
        <dbReference type="Rhea" id="RHEA:79432"/>
    </physiologicalReaction>
</comment>
<comment type="subcellular location">
    <subcellularLocation>
        <location evidence="4">Membrane</location>
        <topology evidence="4">Multi-pass membrane protein</topology>
    </subcellularLocation>
</comment>
<comment type="similarity">
    <text evidence="4">Belongs to the TMEM164 family.</text>
</comment>
<keyword id="KW-0472">Membrane</keyword>
<keyword id="KW-1185">Reference proteome</keyword>
<keyword id="KW-0812">Transmembrane</keyword>
<keyword id="KW-1133">Transmembrane helix</keyword>
<protein>
    <recommendedName>
        <fullName>Transmembrane protein 164</fullName>
    </recommendedName>
    <alternativeName>
        <fullName>Arachidonoyl ether phospholipid synthase</fullName>
    </alternativeName>
</protein>
<reference key="1">
    <citation type="journal article" date="2005" name="Science">
        <title>The transcriptional landscape of the mammalian genome.</title>
        <authorList>
            <person name="Carninci P."/>
            <person name="Kasukawa T."/>
            <person name="Katayama S."/>
            <person name="Gough J."/>
            <person name="Frith M.C."/>
            <person name="Maeda N."/>
            <person name="Oyama R."/>
            <person name="Ravasi T."/>
            <person name="Lenhard B."/>
            <person name="Wells C."/>
            <person name="Kodzius R."/>
            <person name="Shimokawa K."/>
            <person name="Bajic V.B."/>
            <person name="Brenner S.E."/>
            <person name="Batalov S."/>
            <person name="Forrest A.R."/>
            <person name="Zavolan M."/>
            <person name="Davis M.J."/>
            <person name="Wilming L.G."/>
            <person name="Aidinis V."/>
            <person name="Allen J.E."/>
            <person name="Ambesi-Impiombato A."/>
            <person name="Apweiler R."/>
            <person name="Aturaliya R.N."/>
            <person name="Bailey T.L."/>
            <person name="Bansal M."/>
            <person name="Baxter L."/>
            <person name="Beisel K.W."/>
            <person name="Bersano T."/>
            <person name="Bono H."/>
            <person name="Chalk A.M."/>
            <person name="Chiu K.P."/>
            <person name="Choudhary V."/>
            <person name="Christoffels A."/>
            <person name="Clutterbuck D.R."/>
            <person name="Crowe M.L."/>
            <person name="Dalla E."/>
            <person name="Dalrymple B.P."/>
            <person name="de Bono B."/>
            <person name="Della Gatta G."/>
            <person name="di Bernardo D."/>
            <person name="Down T."/>
            <person name="Engstrom P."/>
            <person name="Fagiolini M."/>
            <person name="Faulkner G."/>
            <person name="Fletcher C.F."/>
            <person name="Fukushima T."/>
            <person name="Furuno M."/>
            <person name="Futaki S."/>
            <person name="Gariboldi M."/>
            <person name="Georgii-Hemming P."/>
            <person name="Gingeras T.R."/>
            <person name="Gojobori T."/>
            <person name="Green R.E."/>
            <person name="Gustincich S."/>
            <person name="Harbers M."/>
            <person name="Hayashi Y."/>
            <person name="Hensch T.K."/>
            <person name="Hirokawa N."/>
            <person name="Hill D."/>
            <person name="Huminiecki L."/>
            <person name="Iacono M."/>
            <person name="Ikeo K."/>
            <person name="Iwama A."/>
            <person name="Ishikawa T."/>
            <person name="Jakt M."/>
            <person name="Kanapin A."/>
            <person name="Katoh M."/>
            <person name="Kawasawa Y."/>
            <person name="Kelso J."/>
            <person name="Kitamura H."/>
            <person name="Kitano H."/>
            <person name="Kollias G."/>
            <person name="Krishnan S.P."/>
            <person name="Kruger A."/>
            <person name="Kummerfeld S.K."/>
            <person name="Kurochkin I.V."/>
            <person name="Lareau L.F."/>
            <person name="Lazarevic D."/>
            <person name="Lipovich L."/>
            <person name="Liu J."/>
            <person name="Liuni S."/>
            <person name="McWilliam S."/>
            <person name="Madan Babu M."/>
            <person name="Madera M."/>
            <person name="Marchionni L."/>
            <person name="Matsuda H."/>
            <person name="Matsuzawa S."/>
            <person name="Miki H."/>
            <person name="Mignone F."/>
            <person name="Miyake S."/>
            <person name="Morris K."/>
            <person name="Mottagui-Tabar S."/>
            <person name="Mulder N."/>
            <person name="Nakano N."/>
            <person name="Nakauchi H."/>
            <person name="Ng P."/>
            <person name="Nilsson R."/>
            <person name="Nishiguchi S."/>
            <person name="Nishikawa S."/>
            <person name="Nori F."/>
            <person name="Ohara O."/>
            <person name="Okazaki Y."/>
            <person name="Orlando V."/>
            <person name="Pang K.C."/>
            <person name="Pavan W.J."/>
            <person name="Pavesi G."/>
            <person name="Pesole G."/>
            <person name="Petrovsky N."/>
            <person name="Piazza S."/>
            <person name="Reed J."/>
            <person name="Reid J.F."/>
            <person name="Ring B.Z."/>
            <person name="Ringwald M."/>
            <person name="Rost B."/>
            <person name="Ruan Y."/>
            <person name="Salzberg S.L."/>
            <person name="Sandelin A."/>
            <person name="Schneider C."/>
            <person name="Schoenbach C."/>
            <person name="Sekiguchi K."/>
            <person name="Semple C.A."/>
            <person name="Seno S."/>
            <person name="Sessa L."/>
            <person name="Sheng Y."/>
            <person name="Shibata Y."/>
            <person name="Shimada H."/>
            <person name="Shimada K."/>
            <person name="Silva D."/>
            <person name="Sinclair B."/>
            <person name="Sperling S."/>
            <person name="Stupka E."/>
            <person name="Sugiura K."/>
            <person name="Sultana R."/>
            <person name="Takenaka Y."/>
            <person name="Taki K."/>
            <person name="Tammoja K."/>
            <person name="Tan S.L."/>
            <person name="Tang S."/>
            <person name="Taylor M.S."/>
            <person name="Tegner J."/>
            <person name="Teichmann S.A."/>
            <person name="Ueda H.R."/>
            <person name="van Nimwegen E."/>
            <person name="Verardo R."/>
            <person name="Wei C.L."/>
            <person name="Yagi K."/>
            <person name="Yamanishi H."/>
            <person name="Zabarovsky E."/>
            <person name="Zhu S."/>
            <person name="Zimmer A."/>
            <person name="Hide W."/>
            <person name="Bult C."/>
            <person name="Grimmond S.M."/>
            <person name="Teasdale R.D."/>
            <person name="Liu E.T."/>
            <person name="Brusic V."/>
            <person name="Quackenbush J."/>
            <person name="Wahlestedt C."/>
            <person name="Mattick J.S."/>
            <person name="Hume D.A."/>
            <person name="Kai C."/>
            <person name="Sasaki D."/>
            <person name="Tomaru Y."/>
            <person name="Fukuda S."/>
            <person name="Kanamori-Katayama M."/>
            <person name="Suzuki M."/>
            <person name="Aoki J."/>
            <person name="Arakawa T."/>
            <person name="Iida J."/>
            <person name="Imamura K."/>
            <person name="Itoh M."/>
            <person name="Kato T."/>
            <person name="Kawaji H."/>
            <person name="Kawagashira N."/>
            <person name="Kawashima T."/>
            <person name="Kojima M."/>
            <person name="Kondo S."/>
            <person name="Konno H."/>
            <person name="Nakano K."/>
            <person name="Ninomiya N."/>
            <person name="Nishio T."/>
            <person name="Okada M."/>
            <person name="Plessy C."/>
            <person name="Shibata K."/>
            <person name="Shiraki T."/>
            <person name="Suzuki S."/>
            <person name="Tagami M."/>
            <person name="Waki K."/>
            <person name="Watahiki A."/>
            <person name="Okamura-Oho Y."/>
            <person name="Suzuki H."/>
            <person name="Kawai J."/>
            <person name="Hayashizaki Y."/>
        </authorList>
    </citation>
    <scope>NUCLEOTIDE SEQUENCE [LARGE SCALE MRNA]</scope>
    <source>
        <tissue>Lung</tissue>
    </source>
</reference>
<reference key="2">
    <citation type="journal article" date="2004" name="Genome Res.">
        <title>The status, quality, and expansion of the NIH full-length cDNA project: the Mammalian Gene Collection (MGC).</title>
        <authorList>
            <consortium name="The MGC Project Team"/>
        </authorList>
    </citation>
    <scope>NUCLEOTIDE SEQUENCE [LARGE SCALE MRNA]</scope>
    <source>
        <strain>C57BL/6J</strain>
        <tissue>Brain</tissue>
    </source>
</reference>
<reference key="3">
    <citation type="journal article" date="2010" name="Cell">
        <title>A tissue-specific atlas of mouse protein phosphorylation and expression.</title>
        <authorList>
            <person name="Huttlin E.L."/>
            <person name="Jedrychowski M.P."/>
            <person name="Elias J.E."/>
            <person name="Goswami T."/>
            <person name="Rad R."/>
            <person name="Beausoleil S.A."/>
            <person name="Villen J."/>
            <person name="Haas W."/>
            <person name="Sowa M.E."/>
            <person name="Gygi S.P."/>
        </authorList>
    </citation>
    <scope>IDENTIFICATION BY MASS SPECTROMETRY [LARGE SCALE ANALYSIS]</scope>
    <source>
        <tissue>Lung</tissue>
    </source>
</reference>
<feature type="chain" id="PRO_0000259641" description="Transmembrane protein 164">
    <location>
        <begin position="1"/>
        <end position="296"/>
    </location>
</feature>
<feature type="transmembrane region" description="Helical" evidence="2">
    <location>
        <begin position="40"/>
        <end position="60"/>
    </location>
</feature>
<feature type="transmembrane region" description="Helical" evidence="2">
    <location>
        <begin position="92"/>
        <end position="112"/>
    </location>
</feature>
<feature type="transmembrane region" description="Helical" evidence="2">
    <location>
        <begin position="125"/>
        <end position="145"/>
    </location>
</feature>
<feature type="transmembrane region" description="Helical" evidence="2">
    <location>
        <begin position="149"/>
        <end position="169"/>
    </location>
</feature>
<feature type="transmembrane region" description="Helical" evidence="2">
    <location>
        <begin position="171"/>
        <end position="191"/>
    </location>
</feature>
<feature type="transmembrane region" description="Helical" evidence="2">
    <location>
        <begin position="209"/>
        <end position="229"/>
    </location>
</feature>
<feature type="transmembrane region" description="Helical" evidence="2">
    <location>
        <begin position="261"/>
        <end position="281"/>
    </location>
</feature>
<feature type="region of interest" description="Disordered" evidence="3">
    <location>
        <begin position="66"/>
        <end position="85"/>
    </location>
</feature>
<feature type="compositionally biased region" description="Polar residues" evidence="3">
    <location>
        <begin position="71"/>
        <end position="80"/>
    </location>
</feature>
<accession>Q6PHN7</accession>
<gene>
    <name type="primary">Tmem164</name>
</gene>
<sequence>MSRYSYQSLLDWLYGGVDPSFAGNGGPDCAAFLSWQQRLLESVVVLTLALLEILVALRHILRQKEDGRGGRSSQPQQVTQRPEEGKESLSKNLLLVALCLIFGVEVGFKFATKTVIYLLNPCHLVTMMHIFLLACPPCPGATVIFKLQMHMLNGALLALLFPVVNTRLLPFELEIYYIQHAMLYVVPVYLLWKGGAYTPEPLCNFQWALLSTGLMFFYHFSFLQILGLVTEVNLNNMLCPAISDPFYGPWYRIWASGHQTLMTMTHGKLVILFSYMAGPLCKYLLDLLRLPAKKID</sequence>
<organism>
    <name type="scientific">Mus musculus</name>
    <name type="common">Mouse</name>
    <dbReference type="NCBI Taxonomy" id="10090"/>
    <lineage>
        <taxon>Eukaryota</taxon>
        <taxon>Metazoa</taxon>
        <taxon>Chordata</taxon>
        <taxon>Craniata</taxon>
        <taxon>Vertebrata</taxon>
        <taxon>Euteleostomi</taxon>
        <taxon>Mammalia</taxon>
        <taxon>Eutheria</taxon>
        <taxon>Euarchontoglires</taxon>
        <taxon>Glires</taxon>
        <taxon>Rodentia</taxon>
        <taxon>Myomorpha</taxon>
        <taxon>Muroidea</taxon>
        <taxon>Muridae</taxon>
        <taxon>Murinae</taxon>
        <taxon>Mus</taxon>
        <taxon>Mus</taxon>
    </lineage>
</organism>
<proteinExistence type="evidence at protein level"/>
<name>TM164_MOUSE</name>